<accession>Q0G9Y2</accession>
<sequence>MTAILERRESESLWGRFCNWITSTENRLYIGWFGVLMIPTLLTATSVFIIAFIAAPPVDIDGIREPVSGSLLYGNNIISGAIIPTSAAIGLHFYPIWEAASVDEWLYNGGPYELIVLHFLLGVACYMGREWELSFRLGMRPWIAVAYSAPVAAATAVFLIYPIGQGSFSDGMPLGISGTFNFMIVFQAEHNILMHPFHMLGVAGVFGGSLFSAMHGSLVTSSLIRETTENESANEGYRFGQEEETYNIVAAHGYFGRLIFQYASFNNSRSLHFFLAAWPVVGIWFTALGISTMAFNLNGFNFNQSVVDSQGRVINTWADIINRANLGMEVMHERNAHNFPLDLAAVEAPSTNG</sequence>
<reference key="1">
    <citation type="journal article" date="2006" name="BMC Genomics">
        <title>Complete plastid genome sequence of Daucus carota: implications for biotechnology and phylogeny of angiosperms.</title>
        <authorList>
            <person name="Ruhlman T."/>
            <person name="Lee S.-B."/>
            <person name="Jansen R.K."/>
            <person name="Hostetler J.B."/>
            <person name="Tallon L.J."/>
            <person name="Town C.D."/>
            <person name="Daniell H."/>
        </authorList>
    </citation>
    <scope>NUCLEOTIDE SEQUENCE [LARGE SCALE GENOMIC DNA]</scope>
    <source>
        <strain>cv. Danvers Half-long</strain>
    </source>
</reference>
<comment type="function">
    <text evidence="1">Photosystem II (PSII) is a light-driven water:plastoquinone oxidoreductase that uses light energy to abstract electrons from H(2)O, generating O(2) and a proton gradient subsequently used for ATP formation. It consists of a core antenna complex that captures photons, and an electron transfer chain that converts photonic excitation into a charge separation. The D1/D2 (PsbA/PsbD) reaction center heterodimer binds P680, the primary electron donor of PSII as well as several subsequent electron acceptors.</text>
</comment>
<comment type="catalytic activity">
    <reaction evidence="1">
        <text>2 a plastoquinone + 4 hnu + 2 H2O = 2 a plastoquinol + O2</text>
        <dbReference type="Rhea" id="RHEA:36359"/>
        <dbReference type="Rhea" id="RHEA-COMP:9561"/>
        <dbReference type="Rhea" id="RHEA-COMP:9562"/>
        <dbReference type="ChEBI" id="CHEBI:15377"/>
        <dbReference type="ChEBI" id="CHEBI:15379"/>
        <dbReference type="ChEBI" id="CHEBI:17757"/>
        <dbReference type="ChEBI" id="CHEBI:30212"/>
        <dbReference type="ChEBI" id="CHEBI:62192"/>
        <dbReference type="EC" id="1.10.3.9"/>
    </reaction>
</comment>
<comment type="cofactor">
    <text evidence="1">The D1/D2 heterodimer binds P680, chlorophylls that are the primary electron donor of PSII, and subsequent electron acceptors. It shares a non-heme iron and each subunit binds pheophytin, quinone, additional chlorophylls, carotenoids and lipids. D1 provides most of the ligands for the Mn4-Ca-O5 cluster of the oxygen-evolving complex (OEC). There is also a Cl(-1) ion associated with D1 and D2, which is required for oxygen evolution. The PSII complex binds additional chlorophylls, carotenoids and specific lipids.</text>
</comment>
<comment type="subunit">
    <text evidence="1">PSII is composed of 1 copy each of membrane proteins PsbA, PsbB, PsbC, PsbD, PsbE, PsbF, PsbH, PsbI, PsbJ, PsbK, PsbL, PsbM, PsbT, PsbX, PsbY, PsbZ, Psb30/Ycf12, at least 3 peripheral proteins of the oxygen-evolving complex and a large number of cofactors. It forms dimeric complexes.</text>
</comment>
<comment type="subcellular location">
    <subcellularLocation>
        <location evidence="1">Plastid</location>
        <location evidence="1">Chloroplast thylakoid membrane</location>
        <topology evidence="1">Multi-pass membrane protein</topology>
    </subcellularLocation>
</comment>
<comment type="PTM">
    <text evidence="1">Tyr-161 forms a radical intermediate that is referred to as redox-active TyrZ, YZ or Y-Z.</text>
</comment>
<comment type="PTM">
    <text evidence="1">C-terminally processed by CTPA; processing is essential to allow assembly of the oxygen-evolving complex and thus photosynthetic growth.</text>
</comment>
<comment type="miscellaneous">
    <text evidence="1">2 of the reaction center chlorophylls (ChlD1 and ChlD2) are entirely coordinated by water.</text>
</comment>
<comment type="miscellaneous">
    <text evidence="1">Herbicides such as atrazine, BNT, diuron or ioxynil bind in the Q(B) binding site and block subsequent electron transfer.</text>
</comment>
<comment type="similarity">
    <text evidence="1">Belongs to the reaction center PufL/M/PsbA/D family.</text>
</comment>
<protein>
    <recommendedName>
        <fullName evidence="1">Photosystem II protein D1</fullName>
        <shortName evidence="1">PSII D1 protein</shortName>
        <ecNumber evidence="1">1.10.3.9</ecNumber>
    </recommendedName>
    <alternativeName>
        <fullName evidence="1">Photosystem II Q(B) protein</fullName>
    </alternativeName>
</protein>
<proteinExistence type="inferred from homology"/>
<evidence type="ECO:0000255" key="1">
    <source>
        <dbReference type="HAMAP-Rule" id="MF_01379"/>
    </source>
</evidence>
<gene>
    <name evidence="1" type="primary">psbA</name>
</gene>
<geneLocation type="chloroplast"/>
<feature type="initiator methionine" description="Removed" evidence="1">
    <location>
        <position position="1"/>
    </location>
</feature>
<feature type="chain" id="PRO_0000339985" description="Photosystem II protein D1" evidence="1">
    <location>
        <begin position="2"/>
        <end position="344"/>
    </location>
</feature>
<feature type="propeptide" id="PRO_0000339986" evidence="1">
    <location>
        <begin position="345"/>
        <end position="353"/>
    </location>
</feature>
<feature type="transmembrane region" description="Helical" evidence="1">
    <location>
        <begin position="29"/>
        <end position="46"/>
    </location>
</feature>
<feature type="transmembrane region" description="Helical" evidence="1">
    <location>
        <begin position="118"/>
        <end position="133"/>
    </location>
</feature>
<feature type="transmembrane region" description="Helical" evidence="1">
    <location>
        <begin position="142"/>
        <end position="156"/>
    </location>
</feature>
<feature type="transmembrane region" description="Helical" evidence="1">
    <location>
        <begin position="197"/>
        <end position="218"/>
    </location>
</feature>
<feature type="transmembrane region" description="Helical" evidence="1">
    <location>
        <begin position="274"/>
        <end position="288"/>
    </location>
</feature>
<feature type="binding site" description="axial binding residue" evidence="1">
    <location>
        <position position="118"/>
    </location>
    <ligand>
        <name>chlorophyll a</name>
        <dbReference type="ChEBI" id="CHEBI:58416"/>
        <label>ChlzD1</label>
    </ligand>
    <ligandPart>
        <name>Mg</name>
        <dbReference type="ChEBI" id="CHEBI:25107"/>
    </ligandPart>
</feature>
<feature type="binding site" evidence="1">
    <location>
        <position position="126"/>
    </location>
    <ligand>
        <name>pheophytin a</name>
        <dbReference type="ChEBI" id="CHEBI:136840"/>
        <label>D1</label>
    </ligand>
</feature>
<feature type="binding site" evidence="1">
    <location>
        <position position="170"/>
    </location>
    <ligand>
        <name>[CaMn4O5] cluster</name>
        <dbReference type="ChEBI" id="CHEBI:189552"/>
    </ligand>
</feature>
<feature type="binding site" evidence="1">
    <location>
        <position position="189"/>
    </location>
    <ligand>
        <name>[CaMn4O5] cluster</name>
        <dbReference type="ChEBI" id="CHEBI:189552"/>
    </ligand>
</feature>
<feature type="binding site" description="axial binding residue" evidence="1">
    <location>
        <position position="198"/>
    </location>
    <ligand>
        <name>chlorophyll a</name>
        <dbReference type="ChEBI" id="CHEBI:58416"/>
        <label>PD1</label>
    </ligand>
    <ligandPart>
        <name>Mg</name>
        <dbReference type="ChEBI" id="CHEBI:25107"/>
    </ligandPart>
</feature>
<feature type="binding site" evidence="1">
    <location>
        <position position="215"/>
    </location>
    <ligand>
        <name>a quinone</name>
        <dbReference type="ChEBI" id="CHEBI:132124"/>
        <label>B</label>
    </ligand>
</feature>
<feature type="binding site" evidence="1">
    <location>
        <position position="215"/>
    </location>
    <ligand>
        <name>Fe cation</name>
        <dbReference type="ChEBI" id="CHEBI:24875"/>
        <note>ligand shared with heterodimeric partner</note>
    </ligand>
</feature>
<feature type="binding site" evidence="1">
    <location>
        <begin position="264"/>
        <end position="265"/>
    </location>
    <ligand>
        <name>a quinone</name>
        <dbReference type="ChEBI" id="CHEBI:132124"/>
        <label>B</label>
    </ligand>
</feature>
<feature type="binding site" evidence="1">
    <location>
        <position position="272"/>
    </location>
    <ligand>
        <name>Fe cation</name>
        <dbReference type="ChEBI" id="CHEBI:24875"/>
        <note>ligand shared with heterodimeric partner</note>
    </ligand>
</feature>
<feature type="binding site" evidence="1">
    <location>
        <position position="332"/>
    </location>
    <ligand>
        <name>[CaMn4O5] cluster</name>
        <dbReference type="ChEBI" id="CHEBI:189552"/>
    </ligand>
</feature>
<feature type="binding site" evidence="1">
    <location>
        <position position="333"/>
    </location>
    <ligand>
        <name>[CaMn4O5] cluster</name>
        <dbReference type="ChEBI" id="CHEBI:189552"/>
    </ligand>
</feature>
<feature type="binding site" evidence="1">
    <location>
        <position position="342"/>
    </location>
    <ligand>
        <name>[CaMn4O5] cluster</name>
        <dbReference type="ChEBI" id="CHEBI:189552"/>
    </ligand>
</feature>
<feature type="binding site" evidence="1">
    <location>
        <position position="344"/>
    </location>
    <ligand>
        <name>[CaMn4O5] cluster</name>
        <dbReference type="ChEBI" id="CHEBI:189552"/>
    </ligand>
</feature>
<feature type="site" description="Tyrosine radical intermediate" evidence="1">
    <location>
        <position position="161"/>
    </location>
</feature>
<feature type="site" description="Stabilizes free radical intermediate" evidence="1">
    <location>
        <position position="190"/>
    </location>
</feature>
<feature type="site" description="Cleavage; by CTPA" evidence="1">
    <location>
        <begin position="344"/>
        <end position="345"/>
    </location>
</feature>
<feature type="modified residue" description="N-acetylthreonine" evidence="1">
    <location>
        <position position="2"/>
    </location>
</feature>
<feature type="modified residue" description="Phosphothreonine" evidence="1">
    <location>
        <position position="2"/>
    </location>
</feature>
<keyword id="KW-0007">Acetylation</keyword>
<keyword id="KW-0106">Calcium</keyword>
<keyword id="KW-0148">Chlorophyll</keyword>
<keyword id="KW-0150">Chloroplast</keyword>
<keyword id="KW-0157">Chromophore</keyword>
<keyword id="KW-0249">Electron transport</keyword>
<keyword id="KW-0359">Herbicide resistance</keyword>
<keyword id="KW-0408">Iron</keyword>
<keyword id="KW-0460">Magnesium</keyword>
<keyword id="KW-0464">Manganese</keyword>
<keyword id="KW-0472">Membrane</keyword>
<keyword id="KW-0479">Metal-binding</keyword>
<keyword id="KW-0560">Oxidoreductase</keyword>
<keyword id="KW-0597">Phosphoprotein</keyword>
<keyword id="KW-0602">Photosynthesis</keyword>
<keyword id="KW-0604">Photosystem II</keyword>
<keyword id="KW-0934">Plastid</keyword>
<keyword id="KW-0793">Thylakoid</keyword>
<keyword id="KW-0812">Transmembrane</keyword>
<keyword id="KW-1133">Transmembrane helix</keyword>
<keyword id="KW-0813">Transport</keyword>
<name>PSBA_DAUCA</name>
<dbReference type="EC" id="1.10.3.9" evidence="1"/>
<dbReference type="EMBL" id="DQ898156">
    <property type="protein sequence ID" value="ABI32404.1"/>
    <property type="molecule type" value="Genomic_DNA"/>
</dbReference>
<dbReference type="RefSeq" id="YP_740097.1">
    <property type="nucleotide sequence ID" value="NC_008325.1"/>
</dbReference>
<dbReference type="SMR" id="Q0G9Y2"/>
<dbReference type="GeneID" id="4266700"/>
<dbReference type="OMA" id="CQWVTDT"/>
<dbReference type="GO" id="GO:0009535">
    <property type="term" value="C:chloroplast thylakoid membrane"/>
    <property type="evidence" value="ECO:0007669"/>
    <property type="project" value="UniProtKB-SubCell"/>
</dbReference>
<dbReference type="GO" id="GO:0009523">
    <property type="term" value="C:photosystem II"/>
    <property type="evidence" value="ECO:0007669"/>
    <property type="project" value="UniProtKB-KW"/>
</dbReference>
<dbReference type="GO" id="GO:0016168">
    <property type="term" value="F:chlorophyll binding"/>
    <property type="evidence" value="ECO:0007669"/>
    <property type="project" value="UniProtKB-UniRule"/>
</dbReference>
<dbReference type="GO" id="GO:0045156">
    <property type="term" value="F:electron transporter, transferring electrons within the cyclic electron transport pathway of photosynthesis activity"/>
    <property type="evidence" value="ECO:0007669"/>
    <property type="project" value="InterPro"/>
</dbReference>
<dbReference type="GO" id="GO:0005506">
    <property type="term" value="F:iron ion binding"/>
    <property type="evidence" value="ECO:0007669"/>
    <property type="project" value="UniProtKB-UniRule"/>
</dbReference>
<dbReference type="GO" id="GO:0016682">
    <property type="term" value="F:oxidoreductase activity, acting on diphenols and related substances as donors, oxygen as acceptor"/>
    <property type="evidence" value="ECO:0007669"/>
    <property type="project" value="UniProtKB-UniRule"/>
</dbReference>
<dbReference type="GO" id="GO:0010242">
    <property type="term" value="F:oxygen evolving activity"/>
    <property type="evidence" value="ECO:0007669"/>
    <property type="project" value="UniProtKB-EC"/>
</dbReference>
<dbReference type="GO" id="GO:0009772">
    <property type="term" value="P:photosynthetic electron transport in photosystem II"/>
    <property type="evidence" value="ECO:0007669"/>
    <property type="project" value="InterPro"/>
</dbReference>
<dbReference type="GO" id="GO:0009635">
    <property type="term" value="P:response to herbicide"/>
    <property type="evidence" value="ECO:0007669"/>
    <property type="project" value="UniProtKB-KW"/>
</dbReference>
<dbReference type="CDD" id="cd09289">
    <property type="entry name" value="Photosystem-II_D1"/>
    <property type="match status" value="1"/>
</dbReference>
<dbReference type="FunFam" id="1.20.85.10:FF:000002">
    <property type="entry name" value="Photosystem II protein D1"/>
    <property type="match status" value="1"/>
</dbReference>
<dbReference type="Gene3D" id="1.20.85.10">
    <property type="entry name" value="Photosystem II protein D1-like"/>
    <property type="match status" value="1"/>
</dbReference>
<dbReference type="HAMAP" id="MF_01379">
    <property type="entry name" value="PSII_PsbA_D1"/>
    <property type="match status" value="1"/>
</dbReference>
<dbReference type="InterPro" id="IPR055266">
    <property type="entry name" value="D1/D2"/>
</dbReference>
<dbReference type="InterPro" id="IPR036854">
    <property type="entry name" value="Photo_II_D1/D2_sf"/>
</dbReference>
<dbReference type="InterPro" id="IPR000484">
    <property type="entry name" value="Photo_RC_L/M"/>
</dbReference>
<dbReference type="InterPro" id="IPR055265">
    <property type="entry name" value="Photo_RC_L/M_CS"/>
</dbReference>
<dbReference type="InterPro" id="IPR005867">
    <property type="entry name" value="PSII_D1"/>
</dbReference>
<dbReference type="NCBIfam" id="TIGR01151">
    <property type="entry name" value="psbA"/>
    <property type="match status" value="1"/>
</dbReference>
<dbReference type="PANTHER" id="PTHR33149:SF12">
    <property type="entry name" value="PHOTOSYSTEM II D2 PROTEIN"/>
    <property type="match status" value="1"/>
</dbReference>
<dbReference type="PANTHER" id="PTHR33149">
    <property type="entry name" value="PHOTOSYSTEM II PROTEIN D1"/>
    <property type="match status" value="1"/>
</dbReference>
<dbReference type="Pfam" id="PF00124">
    <property type="entry name" value="Photo_RC"/>
    <property type="match status" value="1"/>
</dbReference>
<dbReference type="PRINTS" id="PR00256">
    <property type="entry name" value="REACTNCENTRE"/>
</dbReference>
<dbReference type="SUPFAM" id="SSF81483">
    <property type="entry name" value="Bacterial photosystem II reaction centre, L and M subunits"/>
    <property type="match status" value="1"/>
</dbReference>
<dbReference type="PROSITE" id="PS00244">
    <property type="entry name" value="REACTION_CENTER"/>
    <property type="match status" value="1"/>
</dbReference>
<organism>
    <name type="scientific">Daucus carota</name>
    <name type="common">Wild carrot</name>
    <dbReference type="NCBI Taxonomy" id="4039"/>
    <lineage>
        <taxon>Eukaryota</taxon>
        <taxon>Viridiplantae</taxon>
        <taxon>Streptophyta</taxon>
        <taxon>Embryophyta</taxon>
        <taxon>Tracheophyta</taxon>
        <taxon>Spermatophyta</taxon>
        <taxon>Magnoliopsida</taxon>
        <taxon>eudicotyledons</taxon>
        <taxon>Gunneridae</taxon>
        <taxon>Pentapetalae</taxon>
        <taxon>asterids</taxon>
        <taxon>campanulids</taxon>
        <taxon>Apiales</taxon>
        <taxon>Apiaceae</taxon>
        <taxon>Apioideae</taxon>
        <taxon>Scandiceae</taxon>
        <taxon>Daucinae</taxon>
        <taxon>Daucus</taxon>
        <taxon>Daucus sect. Daucus</taxon>
    </lineage>
</organism>